<comment type="function">
    <text evidence="1 4">Component of the small ribosomal subunit (PubMed:36517592). The ribosome is a large ribonucleoprotein complex responsible for the synthesis of proteins in the cell (PubMed:36517592). Part of the small subunit (SSU) processome, first precursor of the small eukaryotic ribosomal subunit. During the assembly of the SSU processome in the nucleolus, many ribosome biogenesis factors, an RNA chaperone and ribosomal proteins associate with the nascent pre-rRNA and work in concert to generate RNA folding, modifications, rearrangements and cleavage as well as targeted degradation of pre-ribosomal RNA by the RNA exosome (By similarity).</text>
</comment>
<comment type="subunit">
    <text evidence="1 4">Component of the 40S small ribosomal subunit. Part of the small subunit (SSU) processome, composed of more than 70 proteins and the RNA chaperone small nucleolar RNA (snoRNA) U3 (By similarity).</text>
</comment>
<comment type="subcellular location">
    <subcellularLocation>
        <location evidence="1">Cytoplasm</location>
        <location evidence="1">Cytosol</location>
    </subcellularLocation>
    <subcellularLocation>
        <location evidence="4">Cytoplasm</location>
    </subcellularLocation>
    <subcellularLocation>
        <location evidence="3">Rough endoplasmic reticulum</location>
    </subcellularLocation>
    <subcellularLocation>
        <location evidence="1">Nucleus</location>
        <location evidence="1">Nucleolus</location>
    </subcellularLocation>
    <text evidence="1 3">Detected on cytosolic polysomes (By similarity). Detected in ribosomes that are associated with the rough endoplasmic reticulum (By similarity).</text>
</comment>
<comment type="similarity">
    <text evidence="5">Belongs to the eukaryotic ribosomal protein eS28 family.</text>
</comment>
<accession>P62858</accession>
<accession>P25112</accession>
<accession>Q5BKQ7</accession>
<protein>
    <recommendedName>
        <fullName evidence="5">Small ribosomal subunit protein eS28</fullName>
    </recommendedName>
    <alternativeName>
        <fullName>40S ribosomal protein S28</fullName>
    </alternativeName>
</protein>
<organism>
    <name type="scientific">Mus musculus</name>
    <name type="common">Mouse</name>
    <dbReference type="NCBI Taxonomy" id="10090"/>
    <lineage>
        <taxon>Eukaryota</taxon>
        <taxon>Metazoa</taxon>
        <taxon>Chordata</taxon>
        <taxon>Craniata</taxon>
        <taxon>Vertebrata</taxon>
        <taxon>Euteleostomi</taxon>
        <taxon>Mammalia</taxon>
        <taxon>Eutheria</taxon>
        <taxon>Euarchontoglires</taxon>
        <taxon>Glires</taxon>
        <taxon>Rodentia</taxon>
        <taxon>Myomorpha</taxon>
        <taxon>Muroidea</taxon>
        <taxon>Muridae</taxon>
        <taxon>Murinae</taxon>
        <taxon>Mus</taxon>
        <taxon>Mus</taxon>
    </lineage>
</organism>
<dbReference type="EMBL" id="U11248">
    <property type="protein sequence ID" value="AAA19605.1"/>
    <property type="molecule type" value="mRNA"/>
</dbReference>
<dbReference type="EMBL" id="AK002919">
    <property type="protein sequence ID" value="BAB22456.1"/>
    <property type="molecule type" value="mRNA"/>
</dbReference>
<dbReference type="EMBL" id="AF110520">
    <property type="protein sequence ID" value="AAC97967.1"/>
    <property type="molecule type" value="Genomic_DNA"/>
</dbReference>
<dbReference type="EMBL" id="AF528162">
    <property type="protein sequence ID" value="AAO17375.1"/>
    <property type="molecule type" value="Genomic_DNA"/>
</dbReference>
<dbReference type="EMBL" id="BC010987">
    <property type="protein sequence ID" value="AAH10987.1"/>
    <property type="molecule type" value="mRNA"/>
</dbReference>
<dbReference type="EMBL" id="BC090982">
    <property type="protein sequence ID" value="AAH90982.1"/>
    <property type="molecule type" value="mRNA"/>
</dbReference>
<dbReference type="CCDS" id="CCDS37571.1"/>
<dbReference type="RefSeq" id="NP_001342313.1">
    <property type="nucleotide sequence ID" value="NM_001355384.1"/>
</dbReference>
<dbReference type="RefSeq" id="NP_058540.1">
    <property type="nucleotide sequence ID" value="NM_016844.3"/>
</dbReference>
<dbReference type="RefSeq" id="XP_006524687.1">
    <property type="nucleotide sequence ID" value="XM_006524624.3"/>
</dbReference>
<dbReference type="PDB" id="7CPU">
    <property type="method" value="EM"/>
    <property type="resolution" value="2.82 A"/>
    <property type="chains" value="Sc=1-69"/>
</dbReference>
<dbReference type="PDB" id="7CPV">
    <property type="method" value="EM"/>
    <property type="resolution" value="3.03 A"/>
    <property type="chains" value="Sc=1-69"/>
</dbReference>
<dbReference type="PDB" id="7LS1">
    <property type="method" value="EM"/>
    <property type="resolution" value="3.30 A"/>
    <property type="chains" value="G3=1-69"/>
</dbReference>
<dbReference type="PDB" id="7LS2">
    <property type="method" value="EM"/>
    <property type="resolution" value="3.10 A"/>
    <property type="chains" value="G3=1-69"/>
</dbReference>
<dbReference type="PDBsum" id="7CPU"/>
<dbReference type="PDBsum" id="7CPV"/>
<dbReference type="PDBsum" id="7LS1"/>
<dbReference type="PDBsum" id="7LS2"/>
<dbReference type="EMDB" id="EMD-23500"/>
<dbReference type="EMDB" id="EMD-23501"/>
<dbReference type="EMDB" id="EMD-30432"/>
<dbReference type="EMDB" id="EMD-30433"/>
<dbReference type="SMR" id="P62858"/>
<dbReference type="BioGRID" id="207567">
    <property type="interactions" value="82"/>
</dbReference>
<dbReference type="ComplexPortal" id="CPX-5261">
    <property type="entry name" value="40S cytosolic small ribosomal subunit"/>
</dbReference>
<dbReference type="FunCoup" id="P62858">
    <property type="interactions" value="1717"/>
</dbReference>
<dbReference type="IntAct" id="P62858">
    <property type="interactions" value="1"/>
</dbReference>
<dbReference type="STRING" id="10090.ENSMUSP00000134615"/>
<dbReference type="GlyGen" id="P62858">
    <property type="glycosylation" value="1 site, 1 O-linked glycan (1 site)"/>
</dbReference>
<dbReference type="iPTMnet" id="P62858"/>
<dbReference type="PhosphoSitePlus" id="P62858"/>
<dbReference type="SwissPalm" id="P62858"/>
<dbReference type="jPOST" id="P62858"/>
<dbReference type="PaxDb" id="10090-ENSMUSP00000110013"/>
<dbReference type="PeptideAtlas" id="P62858"/>
<dbReference type="ProteomicsDB" id="262734"/>
<dbReference type="Pumba" id="P62858"/>
<dbReference type="Antibodypedia" id="24844">
    <property type="antibodies" value="83 antibodies from 22 providers"/>
</dbReference>
<dbReference type="DNASU" id="54127"/>
<dbReference type="Ensembl" id="ENSMUST00000087342.13">
    <property type="protein sequence ID" value="ENSMUSP00000110013.5"/>
    <property type="gene ID" value="ENSMUSG00000067288.14"/>
</dbReference>
<dbReference type="Ensembl" id="ENSMUST00000166693.3">
    <property type="protein sequence ID" value="ENSMUSP00000133642.2"/>
    <property type="gene ID" value="ENSMUSG00000067288.14"/>
</dbReference>
<dbReference type="Ensembl" id="ENSMUST00000173019.8">
    <property type="protein sequence ID" value="ENSMUSP00000134615.2"/>
    <property type="gene ID" value="ENSMUSG00000067288.14"/>
</dbReference>
<dbReference type="Ensembl" id="ENSMUST00000173844.8">
    <property type="protein sequence ID" value="ENSMUSP00000133357.2"/>
    <property type="gene ID" value="ENSMUSG00000067288.14"/>
</dbReference>
<dbReference type="GeneID" id="54127"/>
<dbReference type="KEGG" id="mmu:54127"/>
<dbReference type="UCSC" id="uc008bzs.2">
    <property type="organism name" value="mouse"/>
</dbReference>
<dbReference type="AGR" id="MGI:1859516"/>
<dbReference type="CTD" id="6234"/>
<dbReference type="MGI" id="MGI:1859516">
    <property type="gene designation" value="Rps28"/>
</dbReference>
<dbReference type="VEuPathDB" id="HostDB:ENSMUSG00000067288"/>
<dbReference type="eggNOG" id="KOG3502">
    <property type="taxonomic scope" value="Eukaryota"/>
</dbReference>
<dbReference type="GeneTree" id="ENSGT00910000144227"/>
<dbReference type="InParanoid" id="P62858"/>
<dbReference type="OMA" id="NTGMHGE"/>
<dbReference type="OrthoDB" id="10258930at2759"/>
<dbReference type="PhylomeDB" id="P62858"/>
<dbReference type="TreeFam" id="TF300136"/>
<dbReference type="Reactome" id="R-MMU-156827">
    <property type="pathway name" value="L13a-mediated translational silencing of Ceruloplasmin expression"/>
</dbReference>
<dbReference type="Reactome" id="R-MMU-1799339">
    <property type="pathway name" value="SRP-dependent cotranslational protein targeting to membrane"/>
</dbReference>
<dbReference type="Reactome" id="R-MMU-6791226">
    <property type="pathway name" value="Major pathway of rRNA processing in the nucleolus and cytosol"/>
</dbReference>
<dbReference type="Reactome" id="R-MMU-72649">
    <property type="pathway name" value="Translation initiation complex formation"/>
</dbReference>
<dbReference type="Reactome" id="R-MMU-72689">
    <property type="pathway name" value="Formation of a pool of free 40S subunits"/>
</dbReference>
<dbReference type="Reactome" id="R-MMU-72695">
    <property type="pathway name" value="Formation of the ternary complex, and subsequently, the 43S complex"/>
</dbReference>
<dbReference type="Reactome" id="R-MMU-72702">
    <property type="pathway name" value="Ribosomal scanning and start codon recognition"/>
</dbReference>
<dbReference type="Reactome" id="R-MMU-72706">
    <property type="pathway name" value="GTP hydrolysis and joining of the 60S ribosomal subunit"/>
</dbReference>
<dbReference type="Reactome" id="R-MMU-975956">
    <property type="pathway name" value="Nonsense Mediated Decay (NMD) independent of the Exon Junction Complex (EJC)"/>
</dbReference>
<dbReference type="Reactome" id="R-MMU-975957">
    <property type="pathway name" value="Nonsense Mediated Decay (NMD) enhanced by the Exon Junction Complex (EJC)"/>
</dbReference>
<dbReference type="BioGRID-ORCS" id="54127">
    <property type="hits" value="30 hits in 77 CRISPR screens"/>
</dbReference>
<dbReference type="CD-CODE" id="CE726F99">
    <property type="entry name" value="Postsynaptic density"/>
</dbReference>
<dbReference type="ChiTaRS" id="Rps28">
    <property type="organism name" value="mouse"/>
</dbReference>
<dbReference type="PRO" id="PR:P62858"/>
<dbReference type="Proteomes" id="UP000000589">
    <property type="component" value="Chromosome 17"/>
</dbReference>
<dbReference type="RNAct" id="P62858">
    <property type="molecule type" value="protein"/>
</dbReference>
<dbReference type="Bgee" id="ENSMUSG00000067288">
    <property type="expression patterns" value="Expressed in yolk sac and 66 other cell types or tissues"/>
</dbReference>
<dbReference type="ExpressionAtlas" id="P62858">
    <property type="expression patterns" value="baseline and differential"/>
</dbReference>
<dbReference type="GO" id="GO:0005737">
    <property type="term" value="C:cytoplasm"/>
    <property type="evidence" value="ECO:0000303"/>
    <property type="project" value="ComplexPortal"/>
</dbReference>
<dbReference type="GO" id="GO:0098556">
    <property type="term" value="C:cytoplasmic side of rough endoplasmic reticulum membrane"/>
    <property type="evidence" value="ECO:0000250"/>
    <property type="project" value="UniProtKB"/>
</dbReference>
<dbReference type="GO" id="GO:0005829">
    <property type="term" value="C:cytosol"/>
    <property type="evidence" value="ECO:0000304"/>
    <property type="project" value="Reactome"/>
</dbReference>
<dbReference type="GO" id="GO:0022627">
    <property type="term" value="C:cytosolic small ribosomal subunit"/>
    <property type="evidence" value="ECO:0000314"/>
    <property type="project" value="UniProtKB"/>
</dbReference>
<dbReference type="GO" id="GO:0005730">
    <property type="term" value="C:nucleolus"/>
    <property type="evidence" value="ECO:0007669"/>
    <property type="project" value="UniProtKB-SubCell"/>
</dbReference>
<dbReference type="GO" id="GO:0098794">
    <property type="term" value="C:postsynapse"/>
    <property type="evidence" value="ECO:0000303"/>
    <property type="project" value="SynGO"/>
</dbReference>
<dbReference type="GO" id="GO:0098793">
    <property type="term" value="C:presynapse"/>
    <property type="evidence" value="ECO:0000303"/>
    <property type="project" value="SynGO"/>
</dbReference>
<dbReference type="GO" id="GO:0005840">
    <property type="term" value="C:ribosome"/>
    <property type="evidence" value="ECO:0000250"/>
    <property type="project" value="UniProtKB"/>
</dbReference>
<dbReference type="GO" id="GO:0032040">
    <property type="term" value="C:small-subunit processome"/>
    <property type="evidence" value="ECO:0000250"/>
    <property type="project" value="UniProtKB"/>
</dbReference>
<dbReference type="GO" id="GO:0045202">
    <property type="term" value="C:synapse"/>
    <property type="evidence" value="ECO:0000314"/>
    <property type="project" value="SynGO"/>
</dbReference>
<dbReference type="GO" id="GO:0003735">
    <property type="term" value="F:structural constituent of ribosome"/>
    <property type="evidence" value="ECO:0000314"/>
    <property type="project" value="UniProtKB"/>
</dbReference>
<dbReference type="GO" id="GO:0002181">
    <property type="term" value="P:cytoplasmic translation"/>
    <property type="evidence" value="ECO:0000250"/>
    <property type="project" value="UniProtKB"/>
</dbReference>
<dbReference type="GO" id="GO:0042274">
    <property type="term" value="P:ribosomal small subunit biogenesis"/>
    <property type="evidence" value="ECO:0000250"/>
    <property type="project" value="UniProtKB"/>
</dbReference>
<dbReference type="GO" id="GO:0042254">
    <property type="term" value="P:ribosome biogenesis"/>
    <property type="evidence" value="ECO:0000250"/>
    <property type="project" value="UniProtKB"/>
</dbReference>
<dbReference type="GO" id="GO:0006364">
    <property type="term" value="P:rRNA processing"/>
    <property type="evidence" value="ECO:0007669"/>
    <property type="project" value="Ensembl"/>
</dbReference>
<dbReference type="GO" id="GO:0140242">
    <property type="term" value="P:translation at postsynapse"/>
    <property type="evidence" value="ECO:0000303"/>
    <property type="project" value="SynGO"/>
</dbReference>
<dbReference type="GO" id="GO:0140236">
    <property type="term" value="P:translation at presynapse"/>
    <property type="evidence" value="ECO:0000303"/>
    <property type="project" value="SynGO"/>
</dbReference>
<dbReference type="CDD" id="cd04457">
    <property type="entry name" value="S1_S28E"/>
    <property type="match status" value="1"/>
</dbReference>
<dbReference type="FunFam" id="2.40.50.140:FF:000025">
    <property type="entry name" value="40S ribosomal protein S28"/>
    <property type="match status" value="1"/>
</dbReference>
<dbReference type="Gene3D" id="2.40.50.140">
    <property type="entry name" value="Nucleic acid-binding proteins"/>
    <property type="match status" value="1"/>
</dbReference>
<dbReference type="HAMAP" id="MF_00292">
    <property type="entry name" value="Ribosomal_eS28"/>
    <property type="match status" value="1"/>
</dbReference>
<dbReference type="InterPro" id="IPR012340">
    <property type="entry name" value="NA-bd_OB-fold"/>
</dbReference>
<dbReference type="InterPro" id="IPR000289">
    <property type="entry name" value="Ribosomal_eS28"/>
</dbReference>
<dbReference type="InterPro" id="IPR028626">
    <property type="entry name" value="Ribosomal_eS28_CS"/>
</dbReference>
<dbReference type="PANTHER" id="PTHR10769">
    <property type="entry name" value="40S RIBOSOMAL PROTEIN S28"/>
    <property type="match status" value="1"/>
</dbReference>
<dbReference type="PANTHER" id="PTHR10769:SF3">
    <property type="entry name" value="SMALL RIBOSOMAL SUBUNIT PROTEIN ES28"/>
    <property type="match status" value="1"/>
</dbReference>
<dbReference type="Pfam" id="PF01200">
    <property type="entry name" value="Ribosomal_S28e"/>
    <property type="match status" value="1"/>
</dbReference>
<dbReference type="SUPFAM" id="SSF50249">
    <property type="entry name" value="Nucleic acid-binding proteins"/>
    <property type="match status" value="1"/>
</dbReference>
<dbReference type="PROSITE" id="PS00961">
    <property type="entry name" value="RIBOSOMAL_S28E"/>
    <property type="match status" value="1"/>
</dbReference>
<proteinExistence type="evidence at protein level"/>
<name>RS28_MOUSE</name>
<gene>
    <name type="primary">Rps28</name>
</gene>
<sequence length="69" mass="7841">MDTSRVQPIKLARVTKVLGRTGSQGQCTQVRVEFMDDTSRSIIRNVKGPVREGDVLTLLESEREARRLR</sequence>
<reference key="1">
    <citation type="submission" date="1994-06" db="EMBL/GenBank/DDBJ databases">
        <title>Cloning of mouse cDNA for ribosomal protein S28.</title>
        <authorList>
            <person name="Yotov W.V."/>
            <person name="St Arnaud R."/>
        </authorList>
    </citation>
    <scope>NUCLEOTIDE SEQUENCE [MRNA]</scope>
    <source>
        <strain>C57BL/6J</strain>
    </source>
</reference>
<reference key="2">
    <citation type="journal article" date="2005" name="Science">
        <title>The transcriptional landscape of the mammalian genome.</title>
        <authorList>
            <person name="Carninci P."/>
            <person name="Kasukawa T."/>
            <person name="Katayama S."/>
            <person name="Gough J."/>
            <person name="Frith M.C."/>
            <person name="Maeda N."/>
            <person name="Oyama R."/>
            <person name="Ravasi T."/>
            <person name="Lenhard B."/>
            <person name="Wells C."/>
            <person name="Kodzius R."/>
            <person name="Shimokawa K."/>
            <person name="Bajic V.B."/>
            <person name="Brenner S.E."/>
            <person name="Batalov S."/>
            <person name="Forrest A.R."/>
            <person name="Zavolan M."/>
            <person name="Davis M.J."/>
            <person name="Wilming L.G."/>
            <person name="Aidinis V."/>
            <person name="Allen J.E."/>
            <person name="Ambesi-Impiombato A."/>
            <person name="Apweiler R."/>
            <person name="Aturaliya R.N."/>
            <person name="Bailey T.L."/>
            <person name="Bansal M."/>
            <person name="Baxter L."/>
            <person name="Beisel K.W."/>
            <person name="Bersano T."/>
            <person name="Bono H."/>
            <person name="Chalk A.M."/>
            <person name="Chiu K.P."/>
            <person name="Choudhary V."/>
            <person name="Christoffels A."/>
            <person name="Clutterbuck D.R."/>
            <person name="Crowe M.L."/>
            <person name="Dalla E."/>
            <person name="Dalrymple B.P."/>
            <person name="de Bono B."/>
            <person name="Della Gatta G."/>
            <person name="di Bernardo D."/>
            <person name="Down T."/>
            <person name="Engstrom P."/>
            <person name="Fagiolini M."/>
            <person name="Faulkner G."/>
            <person name="Fletcher C.F."/>
            <person name="Fukushima T."/>
            <person name="Furuno M."/>
            <person name="Futaki S."/>
            <person name="Gariboldi M."/>
            <person name="Georgii-Hemming P."/>
            <person name="Gingeras T.R."/>
            <person name="Gojobori T."/>
            <person name="Green R.E."/>
            <person name="Gustincich S."/>
            <person name="Harbers M."/>
            <person name="Hayashi Y."/>
            <person name="Hensch T.K."/>
            <person name="Hirokawa N."/>
            <person name="Hill D."/>
            <person name="Huminiecki L."/>
            <person name="Iacono M."/>
            <person name="Ikeo K."/>
            <person name="Iwama A."/>
            <person name="Ishikawa T."/>
            <person name="Jakt M."/>
            <person name="Kanapin A."/>
            <person name="Katoh M."/>
            <person name="Kawasawa Y."/>
            <person name="Kelso J."/>
            <person name="Kitamura H."/>
            <person name="Kitano H."/>
            <person name="Kollias G."/>
            <person name="Krishnan S.P."/>
            <person name="Kruger A."/>
            <person name="Kummerfeld S.K."/>
            <person name="Kurochkin I.V."/>
            <person name="Lareau L.F."/>
            <person name="Lazarevic D."/>
            <person name="Lipovich L."/>
            <person name="Liu J."/>
            <person name="Liuni S."/>
            <person name="McWilliam S."/>
            <person name="Madan Babu M."/>
            <person name="Madera M."/>
            <person name="Marchionni L."/>
            <person name="Matsuda H."/>
            <person name="Matsuzawa S."/>
            <person name="Miki H."/>
            <person name="Mignone F."/>
            <person name="Miyake S."/>
            <person name="Morris K."/>
            <person name="Mottagui-Tabar S."/>
            <person name="Mulder N."/>
            <person name="Nakano N."/>
            <person name="Nakauchi H."/>
            <person name="Ng P."/>
            <person name="Nilsson R."/>
            <person name="Nishiguchi S."/>
            <person name="Nishikawa S."/>
            <person name="Nori F."/>
            <person name="Ohara O."/>
            <person name="Okazaki Y."/>
            <person name="Orlando V."/>
            <person name="Pang K.C."/>
            <person name="Pavan W.J."/>
            <person name="Pavesi G."/>
            <person name="Pesole G."/>
            <person name="Petrovsky N."/>
            <person name="Piazza S."/>
            <person name="Reed J."/>
            <person name="Reid J.F."/>
            <person name="Ring B.Z."/>
            <person name="Ringwald M."/>
            <person name="Rost B."/>
            <person name="Ruan Y."/>
            <person name="Salzberg S.L."/>
            <person name="Sandelin A."/>
            <person name="Schneider C."/>
            <person name="Schoenbach C."/>
            <person name="Sekiguchi K."/>
            <person name="Semple C.A."/>
            <person name="Seno S."/>
            <person name="Sessa L."/>
            <person name="Sheng Y."/>
            <person name="Shibata Y."/>
            <person name="Shimada H."/>
            <person name="Shimada K."/>
            <person name="Silva D."/>
            <person name="Sinclair B."/>
            <person name="Sperling S."/>
            <person name="Stupka E."/>
            <person name="Sugiura K."/>
            <person name="Sultana R."/>
            <person name="Takenaka Y."/>
            <person name="Taki K."/>
            <person name="Tammoja K."/>
            <person name="Tan S.L."/>
            <person name="Tang S."/>
            <person name="Taylor M.S."/>
            <person name="Tegner J."/>
            <person name="Teichmann S.A."/>
            <person name="Ueda H.R."/>
            <person name="van Nimwegen E."/>
            <person name="Verardo R."/>
            <person name="Wei C.L."/>
            <person name="Yagi K."/>
            <person name="Yamanishi H."/>
            <person name="Zabarovsky E."/>
            <person name="Zhu S."/>
            <person name="Zimmer A."/>
            <person name="Hide W."/>
            <person name="Bult C."/>
            <person name="Grimmond S.M."/>
            <person name="Teasdale R.D."/>
            <person name="Liu E.T."/>
            <person name="Brusic V."/>
            <person name="Quackenbush J."/>
            <person name="Wahlestedt C."/>
            <person name="Mattick J.S."/>
            <person name="Hume D.A."/>
            <person name="Kai C."/>
            <person name="Sasaki D."/>
            <person name="Tomaru Y."/>
            <person name="Fukuda S."/>
            <person name="Kanamori-Katayama M."/>
            <person name="Suzuki M."/>
            <person name="Aoki J."/>
            <person name="Arakawa T."/>
            <person name="Iida J."/>
            <person name="Imamura K."/>
            <person name="Itoh M."/>
            <person name="Kato T."/>
            <person name="Kawaji H."/>
            <person name="Kawagashira N."/>
            <person name="Kawashima T."/>
            <person name="Kojima M."/>
            <person name="Kondo S."/>
            <person name="Konno H."/>
            <person name="Nakano K."/>
            <person name="Ninomiya N."/>
            <person name="Nishio T."/>
            <person name="Okada M."/>
            <person name="Plessy C."/>
            <person name="Shibata K."/>
            <person name="Shiraki T."/>
            <person name="Suzuki S."/>
            <person name="Tagami M."/>
            <person name="Waki K."/>
            <person name="Watahiki A."/>
            <person name="Okamura-Oho Y."/>
            <person name="Suzuki H."/>
            <person name="Kawai J."/>
            <person name="Hayashizaki Y."/>
        </authorList>
    </citation>
    <scope>NUCLEOTIDE SEQUENCE [LARGE SCALE MRNA]</scope>
    <source>
        <strain>C57BL/6J</strain>
        <tissue>Kidney</tissue>
    </source>
</reference>
<reference key="3">
    <citation type="submission" date="1998-12" db="EMBL/GenBank/DDBJ databases">
        <title>Sequence of the mouse major histocompatibility complex class II region.</title>
        <authorList>
            <person name="Rowen L."/>
            <person name="Qin S."/>
            <person name="Madan A."/>
            <person name="Loretz C."/>
            <person name="Hall J."/>
            <person name="James R."/>
            <person name="Dors M."/>
            <person name="Shaffer T."/>
            <person name="Abbasi N."/>
            <person name="Ratcliffe A."/>
            <person name="Dickhoff R."/>
            <person name="Lasky S."/>
            <person name="Hood L."/>
        </authorList>
    </citation>
    <scope>NUCLEOTIDE SEQUENCE [LARGE SCALE GENOMIC DNA]</scope>
    <source>
        <strain>129</strain>
    </source>
</reference>
<reference key="4">
    <citation type="submission" date="2002-07" db="EMBL/GenBank/DDBJ databases">
        <title>Genomic sequence analysis in the mouse T-complex region.</title>
        <authorList>
            <person name="Brathwaite M.E."/>
            <person name="Waeltz P."/>
            <person name="Qian Y."/>
            <person name="Dudekula D."/>
            <person name="Schlessinger D."/>
            <person name="Nagaraja R."/>
        </authorList>
    </citation>
    <scope>NUCLEOTIDE SEQUENCE [LARGE SCALE GENOMIC DNA]</scope>
    <source>
        <strain>129/Sv</strain>
    </source>
</reference>
<reference key="5">
    <citation type="journal article" date="2004" name="Genome Res.">
        <title>The status, quality, and expansion of the NIH full-length cDNA project: the Mammalian Gene Collection (MGC).</title>
        <authorList>
            <consortium name="The MGC Project Team"/>
        </authorList>
    </citation>
    <scope>NUCLEOTIDE SEQUENCE [LARGE SCALE MRNA]</scope>
    <source>
        <tissue>Colon</tissue>
        <tissue>Testis</tissue>
    </source>
</reference>
<reference key="6">
    <citation type="journal article" date="2010" name="Cell">
        <title>A tissue-specific atlas of mouse protein phosphorylation and expression.</title>
        <authorList>
            <person name="Huttlin E.L."/>
            <person name="Jedrychowski M.P."/>
            <person name="Elias J.E."/>
            <person name="Goswami T."/>
            <person name="Rad R."/>
            <person name="Beausoleil S.A."/>
            <person name="Villen J."/>
            <person name="Haas W."/>
            <person name="Sowa M.E."/>
            <person name="Gygi S.P."/>
        </authorList>
    </citation>
    <scope>IDENTIFICATION BY MASS SPECTROMETRY [LARGE SCALE ANALYSIS]</scope>
    <source>
        <tissue>Brain</tissue>
        <tissue>Brown adipose tissue</tissue>
        <tissue>Heart</tissue>
        <tissue>Kidney</tissue>
        <tissue>Liver</tissue>
        <tissue>Lung</tissue>
        <tissue>Pancreas</tissue>
        <tissue>Spleen</tissue>
        <tissue>Testis</tissue>
    </source>
</reference>
<reference evidence="6 7" key="7">
    <citation type="journal article" date="2022" name="Nature">
        <title>A male germ-cell-specific ribosome controls male fertility.</title>
        <authorList>
            <person name="Li H."/>
            <person name="Huo Y."/>
            <person name="He X."/>
            <person name="Yao L."/>
            <person name="Zhang H."/>
            <person name="Cui Y."/>
            <person name="Xiao H."/>
            <person name="Xie W."/>
            <person name="Zhang D."/>
            <person name="Wang Y."/>
            <person name="Zhang S."/>
            <person name="Tu H."/>
            <person name="Cheng Y."/>
            <person name="Guo Y."/>
            <person name="Cao X."/>
            <person name="Zhu Y."/>
            <person name="Jiang T."/>
            <person name="Guo X."/>
            <person name="Qin Y."/>
            <person name="Sha J."/>
        </authorList>
    </citation>
    <scope>STRUCTURE BY ELECTRON MICROSCOPY (3.03 ANGSTROMS) OF RIBOSOME</scope>
    <scope>FUNCTION</scope>
    <scope>SUBUNIT</scope>
    <scope>SUBCELLULAR LOCATION</scope>
</reference>
<feature type="chain" id="PRO_0000136823" description="Small ribosomal subunit protein eS28">
    <location>
        <begin position="1"/>
        <end position="69"/>
    </location>
</feature>
<feature type="modified residue" description="N-acetylmethionine" evidence="2">
    <location>
        <position position="1"/>
    </location>
</feature>
<feature type="modified residue" description="Phosphoserine" evidence="1">
    <location>
        <position position="41"/>
    </location>
</feature>
<keyword id="KW-0002">3D-structure</keyword>
<keyword id="KW-0007">Acetylation</keyword>
<keyword id="KW-0963">Cytoplasm</keyword>
<keyword id="KW-0256">Endoplasmic reticulum</keyword>
<keyword id="KW-0539">Nucleus</keyword>
<keyword id="KW-0597">Phosphoprotein</keyword>
<keyword id="KW-1185">Reference proteome</keyword>
<keyword id="KW-0687">Ribonucleoprotein</keyword>
<keyword id="KW-0689">Ribosomal protein</keyword>
<evidence type="ECO:0000250" key="1">
    <source>
        <dbReference type="UniProtKB" id="P62857"/>
    </source>
</evidence>
<evidence type="ECO:0000250" key="2">
    <source>
        <dbReference type="UniProtKB" id="P62859"/>
    </source>
</evidence>
<evidence type="ECO:0000250" key="3">
    <source>
        <dbReference type="UniProtKB" id="Q6QAT1"/>
    </source>
</evidence>
<evidence type="ECO:0000269" key="4">
    <source>
    </source>
</evidence>
<evidence type="ECO:0000305" key="5"/>
<evidence type="ECO:0007744" key="6">
    <source>
        <dbReference type="PDB" id="7CPU"/>
    </source>
</evidence>
<evidence type="ECO:0007744" key="7">
    <source>
        <dbReference type="PDB" id="7CPV"/>
    </source>
</evidence>